<gene>
    <name type="primary">dml1</name>
    <name type="ORF">AO090005001221</name>
</gene>
<accession>Q2UQJ5</accession>
<name>DML1_ASPOR</name>
<protein>
    <recommendedName>
        <fullName>Protein dml1</fullName>
    </recommendedName>
</protein>
<proteinExistence type="inferred from homology"/>
<dbReference type="EMBL" id="BA000049">
    <property type="protein sequence ID" value="BAE56170.1"/>
    <property type="molecule type" value="Genomic_DNA"/>
</dbReference>
<dbReference type="STRING" id="510516.Q2UQJ5"/>
<dbReference type="EnsemblFungi" id="BAE56170">
    <property type="protein sequence ID" value="BAE56170"/>
    <property type="gene ID" value="AO090005001221"/>
</dbReference>
<dbReference type="HOGENOM" id="CLU_022511_2_0_1"/>
<dbReference type="OMA" id="SYETGWM"/>
<dbReference type="Proteomes" id="UP000006564">
    <property type="component" value="Chromosome 1"/>
</dbReference>
<dbReference type="GO" id="GO:0005739">
    <property type="term" value="C:mitochondrion"/>
    <property type="evidence" value="ECO:0007669"/>
    <property type="project" value="UniProtKB-SubCell"/>
</dbReference>
<dbReference type="GO" id="GO:0007005">
    <property type="term" value="P:mitochondrion organization"/>
    <property type="evidence" value="ECO:0007669"/>
    <property type="project" value="InterPro"/>
</dbReference>
<dbReference type="CDD" id="cd06060">
    <property type="entry name" value="misato"/>
    <property type="match status" value="1"/>
</dbReference>
<dbReference type="Gene3D" id="3.40.50.1440">
    <property type="entry name" value="Tubulin/FtsZ, GTPase domain"/>
    <property type="match status" value="1"/>
</dbReference>
<dbReference type="InterPro" id="IPR049942">
    <property type="entry name" value="DML1/Misato"/>
</dbReference>
<dbReference type="InterPro" id="IPR029209">
    <property type="entry name" value="DML1/Misato_tubulin"/>
</dbReference>
<dbReference type="InterPro" id="IPR019605">
    <property type="entry name" value="Misato_II_tubulin-like"/>
</dbReference>
<dbReference type="InterPro" id="IPR036525">
    <property type="entry name" value="Tubulin/FtsZ_GTPase_sf"/>
</dbReference>
<dbReference type="PANTHER" id="PTHR13391">
    <property type="entry name" value="MITOCHONDRIAL DISTRIBUTION REGULATOR MISATO"/>
    <property type="match status" value="1"/>
</dbReference>
<dbReference type="PANTHER" id="PTHR13391:SF0">
    <property type="entry name" value="PROTEIN MISATO HOMOLOG 1"/>
    <property type="match status" value="1"/>
</dbReference>
<dbReference type="Pfam" id="PF10644">
    <property type="entry name" value="Misat_Tub_SegII"/>
    <property type="match status" value="1"/>
</dbReference>
<dbReference type="Pfam" id="PF14881">
    <property type="entry name" value="Tubulin_3"/>
    <property type="match status" value="1"/>
</dbReference>
<dbReference type="SUPFAM" id="SSF52490">
    <property type="entry name" value="Tubulin nucleotide-binding domain-like"/>
    <property type="match status" value="1"/>
</dbReference>
<sequence length="493" mass="55902">MHEIVTLQLGQRANYLATHFWNLQESYFTYNGEEESPVDHDVHFRPGVGADGTETFTPRTVIYDLKGAFGTLRKYNALYELTEDANLGQGLWDGKEVIQQQTPISQSDYQKNLDAGLPAPKLTTETVRYWSDYNRLFYHPRSIVQLNDYELNSMIMPFEDWSVGEDLFSDLDKEHDLLDRDVRPFAEECDQLRAIQLFTSSDDAWGGFSARYVDRLRDEFGKKSIWVWAIEGGSRVSRQTQLKRDMNKARTIYSISPQSSLYTPIIDPPSHTLSKVHFDPHSEWHTTALISSAMESVTLPTRLRQFHDFESSLAGDDGTHKIFELQSSVTADDGGNRQHLPVKGPLTETNASEQGAAKSQAKFELDFTYDGRGSSNSHIFNQLQVWRGTNLDQDKGSVAQEDIGLSRKQRYYNSAPMFQSYPSHMFSGAKQNKINVLAALTASSRTAERIKVLETVAGRIIGVDERETLVNGLGEIRESYETGWSNDSDFNDI</sequence>
<comment type="function">
    <text evidence="1">Involved in the partitioning of the mitochondrial organelle and mitochondrial DNA (mtDNA) inheritance.</text>
</comment>
<comment type="subcellular location">
    <subcellularLocation>
        <location evidence="1">Mitochondrion</location>
    </subcellularLocation>
</comment>
<comment type="similarity">
    <text evidence="2">Belongs to the misato family.</text>
</comment>
<keyword id="KW-0496">Mitochondrion</keyword>
<keyword id="KW-1185">Reference proteome</keyword>
<evidence type="ECO:0000250" key="1"/>
<evidence type="ECO:0000305" key="2"/>
<organism>
    <name type="scientific">Aspergillus oryzae (strain ATCC 42149 / RIB 40)</name>
    <name type="common">Yellow koji mold</name>
    <dbReference type="NCBI Taxonomy" id="510516"/>
    <lineage>
        <taxon>Eukaryota</taxon>
        <taxon>Fungi</taxon>
        <taxon>Dikarya</taxon>
        <taxon>Ascomycota</taxon>
        <taxon>Pezizomycotina</taxon>
        <taxon>Eurotiomycetes</taxon>
        <taxon>Eurotiomycetidae</taxon>
        <taxon>Eurotiales</taxon>
        <taxon>Aspergillaceae</taxon>
        <taxon>Aspergillus</taxon>
        <taxon>Aspergillus subgen. Circumdati</taxon>
    </lineage>
</organism>
<feature type="chain" id="PRO_0000285330" description="Protein dml1">
    <location>
        <begin position="1"/>
        <end position="493"/>
    </location>
</feature>
<reference key="1">
    <citation type="journal article" date="2005" name="Nature">
        <title>Genome sequencing and analysis of Aspergillus oryzae.</title>
        <authorList>
            <person name="Machida M."/>
            <person name="Asai K."/>
            <person name="Sano M."/>
            <person name="Tanaka T."/>
            <person name="Kumagai T."/>
            <person name="Terai G."/>
            <person name="Kusumoto K."/>
            <person name="Arima T."/>
            <person name="Akita O."/>
            <person name="Kashiwagi Y."/>
            <person name="Abe K."/>
            <person name="Gomi K."/>
            <person name="Horiuchi H."/>
            <person name="Kitamoto K."/>
            <person name="Kobayashi T."/>
            <person name="Takeuchi M."/>
            <person name="Denning D.W."/>
            <person name="Galagan J.E."/>
            <person name="Nierman W.C."/>
            <person name="Yu J."/>
            <person name="Archer D.B."/>
            <person name="Bennett J.W."/>
            <person name="Bhatnagar D."/>
            <person name="Cleveland T.E."/>
            <person name="Fedorova N.D."/>
            <person name="Gotoh O."/>
            <person name="Horikawa H."/>
            <person name="Hosoyama A."/>
            <person name="Ichinomiya M."/>
            <person name="Igarashi R."/>
            <person name="Iwashita K."/>
            <person name="Juvvadi P.R."/>
            <person name="Kato M."/>
            <person name="Kato Y."/>
            <person name="Kin T."/>
            <person name="Kokubun A."/>
            <person name="Maeda H."/>
            <person name="Maeyama N."/>
            <person name="Maruyama J."/>
            <person name="Nagasaki H."/>
            <person name="Nakajima T."/>
            <person name="Oda K."/>
            <person name="Okada K."/>
            <person name="Paulsen I."/>
            <person name="Sakamoto K."/>
            <person name="Sawano T."/>
            <person name="Takahashi M."/>
            <person name="Takase K."/>
            <person name="Terabayashi Y."/>
            <person name="Wortman J.R."/>
            <person name="Yamada O."/>
            <person name="Yamagata Y."/>
            <person name="Anazawa H."/>
            <person name="Hata Y."/>
            <person name="Koide Y."/>
            <person name="Komori T."/>
            <person name="Koyama Y."/>
            <person name="Minetoki T."/>
            <person name="Suharnan S."/>
            <person name="Tanaka A."/>
            <person name="Isono K."/>
            <person name="Kuhara S."/>
            <person name="Ogasawara N."/>
            <person name="Kikuchi H."/>
        </authorList>
    </citation>
    <scope>NUCLEOTIDE SEQUENCE [LARGE SCALE GENOMIC DNA]</scope>
    <source>
        <strain>ATCC 42149 / RIB 40</strain>
    </source>
</reference>